<accession>F1LMZ8</accession>
<gene>
    <name type="primary">Psmd11</name>
</gene>
<proteinExistence type="evidence at protein level"/>
<organism>
    <name type="scientific">Rattus norvegicus</name>
    <name type="common">Rat</name>
    <dbReference type="NCBI Taxonomy" id="10116"/>
    <lineage>
        <taxon>Eukaryota</taxon>
        <taxon>Metazoa</taxon>
        <taxon>Chordata</taxon>
        <taxon>Craniata</taxon>
        <taxon>Vertebrata</taxon>
        <taxon>Euteleostomi</taxon>
        <taxon>Mammalia</taxon>
        <taxon>Eutheria</taxon>
        <taxon>Euarchontoglires</taxon>
        <taxon>Glires</taxon>
        <taxon>Rodentia</taxon>
        <taxon>Myomorpha</taxon>
        <taxon>Muroidea</taxon>
        <taxon>Muridae</taxon>
        <taxon>Murinae</taxon>
        <taxon>Rattus</taxon>
    </lineage>
</organism>
<name>PSD11_RAT</name>
<dbReference type="RefSeq" id="NP_001380935.1">
    <property type="nucleotide sequence ID" value="NM_001394006.1"/>
</dbReference>
<dbReference type="PDB" id="6EPC">
    <property type="method" value="EM"/>
    <property type="resolution" value="12.30 A"/>
    <property type="chains" value="Q=1-422"/>
</dbReference>
<dbReference type="PDB" id="6EPD">
    <property type="method" value="EM"/>
    <property type="resolution" value="15.40 A"/>
    <property type="chains" value="Q=1-422"/>
</dbReference>
<dbReference type="PDB" id="6EPE">
    <property type="method" value="EM"/>
    <property type="resolution" value="12.80 A"/>
    <property type="chains" value="Q=1-422"/>
</dbReference>
<dbReference type="PDB" id="6EPF">
    <property type="method" value="EM"/>
    <property type="resolution" value="11.80 A"/>
    <property type="chains" value="Q=1-422"/>
</dbReference>
<dbReference type="PDBsum" id="6EPC"/>
<dbReference type="PDBsum" id="6EPD"/>
<dbReference type="PDBsum" id="6EPE"/>
<dbReference type="PDBsum" id="6EPF"/>
<dbReference type="EMDB" id="EMD-3913"/>
<dbReference type="EMDB" id="EMD-3914"/>
<dbReference type="EMDB" id="EMD-3915"/>
<dbReference type="EMDB" id="EMD-3916"/>
<dbReference type="SMR" id="F1LMZ8"/>
<dbReference type="ComplexPortal" id="CPX-8962">
    <property type="entry name" value="19S proteasome regulatory complex"/>
</dbReference>
<dbReference type="ComplexPortal" id="CPX-8965">
    <property type="entry name" value="30S proteasome complex"/>
</dbReference>
<dbReference type="FunCoup" id="F1LMZ8">
    <property type="interactions" value="4156"/>
</dbReference>
<dbReference type="IntAct" id="F1LMZ8">
    <property type="interactions" value="5"/>
</dbReference>
<dbReference type="STRING" id="10116.ENSRNOP00000070048"/>
<dbReference type="ChEMBL" id="CHEMBL5169096"/>
<dbReference type="iPTMnet" id="F1LMZ8"/>
<dbReference type="PhosphoSitePlus" id="F1LMZ8"/>
<dbReference type="jPOST" id="F1LMZ8"/>
<dbReference type="PaxDb" id="10116-ENSRNOP00000062146"/>
<dbReference type="GeneID" id="303353"/>
<dbReference type="AGR" id="RGD:1306450"/>
<dbReference type="RGD" id="1306450">
    <property type="gene designation" value="Psmd11"/>
</dbReference>
<dbReference type="eggNOG" id="KOG1463">
    <property type="taxonomic scope" value="Eukaryota"/>
</dbReference>
<dbReference type="InParanoid" id="F1LMZ8"/>
<dbReference type="Reactome" id="R-RNO-1169091">
    <property type="pathway name" value="Activation of NF-kappaB in B cells"/>
</dbReference>
<dbReference type="Reactome" id="R-RNO-1234176">
    <property type="pathway name" value="Oxygen-dependent proline hydroxylation of Hypoxia-inducible Factor Alpha"/>
</dbReference>
<dbReference type="Reactome" id="R-RNO-1236978">
    <property type="pathway name" value="Cross-presentation of soluble exogenous antigens (endosomes)"/>
</dbReference>
<dbReference type="Reactome" id="R-RNO-174084">
    <property type="pathway name" value="Autodegradation of Cdh1 by Cdh1:APC/C"/>
</dbReference>
<dbReference type="Reactome" id="R-RNO-174113">
    <property type="pathway name" value="SCF-beta-TrCP mediated degradation of Emi1"/>
</dbReference>
<dbReference type="Reactome" id="R-RNO-174154">
    <property type="pathway name" value="APC/C:Cdc20 mediated degradation of Securin"/>
</dbReference>
<dbReference type="Reactome" id="R-RNO-174178">
    <property type="pathway name" value="APC/C:Cdh1 mediated degradation of Cdc20 and other APC/C:Cdh1 targeted proteins in late mitosis/early G1"/>
</dbReference>
<dbReference type="Reactome" id="R-RNO-174184">
    <property type="pathway name" value="Cdc20:Phospho-APC/C mediated degradation of Cyclin A"/>
</dbReference>
<dbReference type="Reactome" id="R-RNO-187577">
    <property type="pathway name" value="SCF(Skp2)-mediated degradation of p27/p21"/>
</dbReference>
<dbReference type="Reactome" id="R-RNO-195253">
    <property type="pathway name" value="Degradation of beta-catenin by the destruction complex"/>
</dbReference>
<dbReference type="Reactome" id="R-RNO-2467813">
    <property type="pathway name" value="Separation of Sister Chromatids"/>
</dbReference>
<dbReference type="Reactome" id="R-RNO-349425">
    <property type="pathway name" value="Autodegradation of the E3 ubiquitin ligase COP1"/>
</dbReference>
<dbReference type="Reactome" id="R-RNO-350562">
    <property type="pathway name" value="Regulation of ornithine decarboxylase (ODC)"/>
</dbReference>
<dbReference type="Reactome" id="R-RNO-382556">
    <property type="pathway name" value="ABC-family proteins mediated transport"/>
</dbReference>
<dbReference type="Reactome" id="R-RNO-450408">
    <property type="pathway name" value="AUF1 (hnRNP D0) binds and destabilizes mRNA"/>
</dbReference>
<dbReference type="Reactome" id="R-RNO-4608870">
    <property type="pathway name" value="Asymmetric localization of PCP proteins"/>
</dbReference>
<dbReference type="Reactome" id="R-RNO-4641257">
    <property type="pathway name" value="Degradation of AXIN"/>
</dbReference>
<dbReference type="Reactome" id="R-RNO-4641258">
    <property type="pathway name" value="Degradation of DVL"/>
</dbReference>
<dbReference type="Reactome" id="R-RNO-5358346">
    <property type="pathway name" value="Hedgehog ligand biogenesis"/>
</dbReference>
<dbReference type="Reactome" id="R-RNO-5607761">
    <property type="pathway name" value="Dectin-1 mediated noncanonical NF-kB signaling"/>
</dbReference>
<dbReference type="Reactome" id="R-RNO-5610780">
    <property type="pathway name" value="Degradation of GLI1 by the proteasome"/>
</dbReference>
<dbReference type="Reactome" id="R-RNO-5610785">
    <property type="pathway name" value="GLI3 is processed to GLI3R by the proteasome"/>
</dbReference>
<dbReference type="Reactome" id="R-RNO-5632684">
    <property type="pathway name" value="Hedgehog 'on' state"/>
</dbReference>
<dbReference type="Reactome" id="R-RNO-5658442">
    <property type="pathway name" value="Regulation of RAS by GAPs"/>
</dbReference>
<dbReference type="Reactome" id="R-RNO-5668541">
    <property type="pathway name" value="TNFR2 non-canonical NF-kB pathway"/>
</dbReference>
<dbReference type="Reactome" id="R-RNO-5676590">
    <property type="pathway name" value="NIK--&gt;noncanonical NF-kB signaling"/>
</dbReference>
<dbReference type="Reactome" id="R-RNO-5687128">
    <property type="pathway name" value="MAPK6/MAPK4 signaling"/>
</dbReference>
<dbReference type="Reactome" id="R-RNO-5689603">
    <property type="pathway name" value="UCH proteinases"/>
</dbReference>
<dbReference type="Reactome" id="R-RNO-5689880">
    <property type="pathway name" value="Ub-specific processing proteases"/>
</dbReference>
<dbReference type="Reactome" id="R-RNO-6798695">
    <property type="pathway name" value="Neutrophil degranulation"/>
</dbReference>
<dbReference type="Reactome" id="R-RNO-68867">
    <property type="pathway name" value="Assembly of the pre-replicative complex"/>
</dbReference>
<dbReference type="Reactome" id="R-RNO-68949">
    <property type="pathway name" value="Orc1 removal from chromatin"/>
</dbReference>
<dbReference type="Reactome" id="R-RNO-69017">
    <property type="pathway name" value="CDK-mediated phosphorylation and removal of Cdc6"/>
</dbReference>
<dbReference type="Reactome" id="R-RNO-69481">
    <property type="pathway name" value="G2/M Checkpoints"/>
</dbReference>
<dbReference type="Reactome" id="R-RNO-69601">
    <property type="pathway name" value="Ubiquitin Mediated Degradation of Phosphorylated Cdc25A"/>
</dbReference>
<dbReference type="Reactome" id="R-RNO-75815">
    <property type="pathway name" value="Ubiquitin-dependent degradation of Cyclin D"/>
</dbReference>
<dbReference type="Reactome" id="R-RNO-8852276">
    <property type="pathway name" value="The role of GTSE1 in G2/M progression after G2 checkpoint"/>
</dbReference>
<dbReference type="Reactome" id="R-RNO-8854050">
    <property type="pathway name" value="FBXL7 down-regulates AURKA during mitotic entry and in early mitosis"/>
</dbReference>
<dbReference type="Reactome" id="R-RNO-8939236">
    <property type="pathway name" value="RUNX1 regulates transcription of genes involved in differentiation of HSCs"/>
</dbReference>
<dbReference type="Reactome" id="R-RNO-8941858">
    <property type="pathway name" value="Regulation of RUNX3 expression and activity"/>
</dbReference>
<dbReference type="Reactome" id="R-RNO-8948751">
    <property type="pathway name" value="Regulation of PTEN stability and activity"/>
</dbReference>
<dbReference type="Reactome" id="R-RNO-8951664">
    <property type="pathway name" value="Neddylation"/>
</dbReference>
<dbReference type="Reactome" id="R-RNO-9755511">
    <property type="pathway name" value="KEAP1-NFE2L2 pathway"/>
</dbReference>
<dbReference type="Reactome" id="R-RNO-9762114">
    <property type="pathway name" value="GSK3B and BTRC:CUL1-mediated-degradation of NFE2L2"/>
</dbReference>
<dbReference type="Reactome" id="R-RNO-983168">
    <property type="pathway name" value="Antigen processing: Ubiquitination &amp; Proteasome degradation"/>
</dbReference>
<dbReference type="Reactome" id="R-RNO-9907900">
    <property type="pathway name" value="Proteasome assembly"/>
</dbReference>
<dbReference type="PRO" id="PR:F1LMZ8"/>
<dbReference type="Proteomes" id="UP000002494">
    <property type="component" value="Unplaced"/>
</dbReference>
<dbReference type="GO" id="GO:0005829">
    <property type="term" value="C:cytosol"/>
    <property type="evidence" value="ECO:0007669"/>
    <property type="project" value="UniProtKB-SubCell"/>
</dbReference>
<dbReference type="GO" id="GO:0005634">
    <property type="term" value="C:nucleus"/>
    <property type="evidence" value="ECO:0007669"/>
    <property type="project" value="UniProtKB-SubCell"/>
</dbReference>
<dbReference type="GO" id="GO:0022624">
    <property type="term" value="C:proteasome accessory complex"/>
    <property type="evidence" value="ECO:0000250"/>
    <property type="project" value="UniProtKB"/>
</dbReference>
<dbReference type="GO" id="GO:0000502">
    <property type="term" value="C:proteasome complex"/>
    <property type="evidence" value="ECO:0000266"/>
    <property type="project" value="RGD"/>
</dbReference>
<dbReference type="GO" id="GO:0005838">
    <property type="term" value="C:proteasome regulatory particle"/>
    <property type="evidence" value="ECO:0000266"/>
    <property type="project" value="RGD"/>
</dbReference>
<dbReference type="GO" id="GO:0008541">
    <property type="term" value="C:proteasome regulatory particle, lid subcomplex"/>
    <property type="evidence" value="ECO:0000318"/>
    <property type="project" value="GO_Central"/>
</dbReference>
<dbReference type="GO" id="GO:0005198">
    <property type="term" value="F:structural molecule activity"/>
    <property type="evidence" value="ECO:0000318"/>
    <property type="project" value="GO_Central"/>
</dbReference>
<dbReference type="GO" id="GO:0043248">
    <property type="term" value="P:proteasome assembly"/>
    <property type="evidence" value="ECO:0000250"/>
    <property type="project" value="UniProtKB"/>
</dbReference>
<dbReference type="GO" id="GO:0048863">
    <property type="term" value="P:stem cell differentiation"/>
    <property type="evidence" value="ECO:0000250"/>
    <property type="project" value="UniProtKB"/>
</dbReference>
<dbReference type="GO" id="GO:0006511">
    <property type="term" value="P:ubiquitin-dependent protein catabolic process"/>
    <property type="evidence" value="ECO:0000250"/>
    <property type="project" value="UniProtKB"/>
</dbReference>
<dbReference type="FunFam" id="1.25.40.570:FF:000003">
    <property type="entry name" value="26S proteasome non-ATPase regulatory subunit 11"/>
    <property type="match status" value="1"/>
</dbReference>
<dbReference type="Gene3D" id="1.25.40.570">
    <property type="match status" value="1"/>
</dbReference>
<dbReference type="InterPro" id="IPR050871">
    <property type="entry name" value="26S_Proteasome/COP9_Components"/>
</dbReference>
<dbReference type="InterPro" id="IPR000717">
    <property type="entry name" value="PCI_dom"/>
</dbReference>
<dbReference type="InterPro" id="IPR040780">
    <property type="entry name" value="Rpn6_C_helix"/>
</dbReference>
<dbReference type="InterPro" id="IPR040773">
    <property type="entry name" value="Rpn6_N"/>
</dbReference>
<dbReference type="InterPro" id="IPR011990">
    <property type="entry name" value="TPR-like_helical_dom_sf"/>
</dbReference>
<dbReference type="InterPro" id="IPR036390">
    <property type="entry name" value="WH_DNA-bd_sf"/>
</dbReference>
<dbReference type="PANTHER" id="PTHR10678">
    <property type="entry name" value="26S PROTEASOME NON-ATPASE REGULATORY SUBUNIT 11/COP9 SIGNALOSOME COMPLEX SUBUNIT 2"/>
    <property type="match status" value="1"/>
</dbReference>
<dbReference type="Pfam" id="PF01399">
    <property type="entry name" value="PCI"/>
    <property type="match status" value="1"/>
</dbReference>
<dbReference type="Pfam" id="PF18503">
    <property type="entry name" value="RPN6_C_helix"/>
    <property type="match status" value="1"/>
</dbReference>
<dbReference type="Pfam" id="PF18055">
    <property type="entry name" value="RPN6_N"/>
    <property type="match status" value="1"/>
</dbReference>
<dbReference type="SMART" id="SM00753">
    <property type="entry name" value="PAM"/>
    <property type="match status" value="1"/>
</dbReference>
<dbReference type="SMART" id="SM00088">
    <property type="entry name" value="PINT"/>
    <property type="match status" value="1"/>
</dbReference>
<dbReference type="SUPFAM" id="SSF48452">
    <property type="entry name" value="TPR-like"/>
    <property type="match status" value="1"/>
</dbReference>
<dbReference type="SUPFAM" id="SSF46785">
    <property type="entry name" value="Winged helix' DNA-binding domain"/>
    <property type="match status" value="1"/>
</dbReference>
<dbReference type="PROSITE" id="PS50250">
    <property type="entry name" value="PCI"/>
    <property type="match status" value="1"/>
</dbReference>
<reference key="1">
    <citation type="journal article" date="2004" name="Nature">
        <title>Genome sequence of the Brown Norway rat yields insights into mammalian evolution.</title>
        <authorList>
            <person name="Gibbs R.A."/>
            <person name="Weinstock G.M."/>
            <person name="Metzker M.L."/>
            <person name="Muzny D.M."/>
            <person name="Sodergren E.J."/>
            <person name="Scherer S."/>
            <person name="Scott G."/>
            <person name="Steffen D."/>
            <person name="Worley K.C."/>
            <person name="Burch P.E."/>
            <person name="Okwuonu G."/>
            <person name="Hines S."/>
            <person name="Lewis L."/>
            <person name="Deramo C."/>
            <person name="Delgado O."/>
            <person name="Dugan-Rocha S."/>
            <person name="Miner G."/>
            <person name="Morgan M."/>
            <person name="Hawes A."/>
            <person name="Gill R."/>
            <person name="Holt R.A."/>
            <person name="Adams M.D."/>
            <person name="Amanatides P.G."/>
            <person name="Baden-Tillson H."/>
            <person name="Barnstead M."/>
            <person name="Chin S."/>
            <person name="Evans C.A."/>
            <person name="Ferriera S."/>
            <person name="Fosler C."/>
            <person name="Glodek A."/>
            <person name="Gu Z."/>
            <person name="Jennings D."/>
            <person name="Kraft C.L."/>
            <person name="Nguyen T."/>
            <person name="Pfannkoch C.M."/>
            <person name="Sitter C."/>
            <person name="Sutton G.G."/>
            <person name="Venter J.C."/>
            <person name="Woodage T."/>
            <person name="Smith D."/>
            <person name="Lee H.-M."/>
            <person name="Gustafson E."/>
            <person name="Cahill P."/>
            <person name="Kana A."/>
            <person name="Doucette-Stamm L."/>
            <person name="Weinstock K."/>
            <person name="Fechtel K."/>
            <person name="Weiss R.B."/>
            <person name="Dunn D.M."/>
            <person name="Green E.D."/>
            <person name="Blakesley R.W."/>
            <person name="Bouffard G.G."/>
            <person name="De Jong P.J."/>
            <person name="Osoegawa K."/>
            <person name="Zhu B."/>
            <person name="Marra M."/>
            <person name="Schein J."/>
            <person name="Bosdet I."/>
            <person name="Fjell C."/>
            <person name="Jones S."/>
            <person name="Krzywinski M."/>
            <person name="Mathewson C."/>
            <person name="Siddiqui A."/>
            <person name="Wye N."/>
            <person name="McPherson J."/>
            <person name="Zhao S."/>
            <person name="Fraser C.M."/>
            <person name="Shetty J."/>
            <person name="Shatsman S."/>
            <person name="Geer K."/>
            <person name="Chen Y."/>
            <person name="Abramzon S."/>
            <person name="Nierman W.C."/>
            <person name="Havlak P.H."/>
            <person name="Chen R."/>
            <person name="Durbin K.J."/>
            <person name="Egan A."/>
            <person name="Ren Y."/>
            <person name="Song X.-Z."/>
            <person name="Li B."/>
            <person name="Liu Y."/>
            <person name="Qin X."/>
            <person name="Cawley S."/>
            <person name="Cooney A.J."/>
            <person name="D'Souza L.M."/>
            <person name="Martin K."/>
            <person name="Wu J.Q."/>
            <person name="Gonzalez-Garay M.L."/>
            <person name="Jackson A.R."/>
            <person name="Kalafus K.J."/>
            <person name="McLeod M.P."/>
            <person name="Milosavljevic A."/>
            <person name="Virk D."/>
            <person name="Volkov A."/>
            <person name="Wheeler D.A."/>
            <person name="Zhang Z."/>
            <person name="Bailey J.A."/>
            <person name="Eichler E.E."/>
            <person name="Tuzun E."/>
            <person name="Birney E."/>
            <person name="Mongin E."/>
            <person name="Ureta-Vidal A."/>
            <person name="Woodwark C."/>
            <person name="Zdobnov E."/>
            <person name="Bork P."/>
            <person name="Suyama M."/>
            <person name="Torrents D."/>
            <person name="Alexandersson M."/>
            <person name="Trask B.J."/>
            <person name="Young J.M."/>
            <person name="Huang H."/>
            <person name="Wang H."/>
            <person name="Xing H."/>
            <person name="Daniels S."/>
            <person name="Gietzen D."/>
            <person name="Schmidt J."/>
            <person name="Stevens K."/>
            <person name="Vitt U."/>
            <person name="Wingrove J."/>
            <person name="Camara F."/>
            <person name="Mar Alba M."/>
            <person name="Abril J.F."/>
            <person name="Guigo R."/>
            <person name="Smit A."/>
            <person name="Dubchak I."/>
            <person name="Rubin E.M."/>
            <person name="Couronne O."/>
            <person name="Poliakov A."/>
            <person name="Huebner N."/>
            <person name="Ganten D."/>
            <person name="Goesele C."/>
            <person name="Hummel O."/>
            <person name="Kreitler T."/>
            <person name="Lee Y.-A."/>
            <person name="Monti J."/>
            <person name="Schulz H."/>
            <person name="Zimdahl H."/>
            <person name="Himmelbauer H."/>
            <person name="Lehrach H."/>
            <person name="Jacob H.J."/>
            <person name="Bromberg S."/>
            <person name="Gullings-Handley J."/>
            <person name="Jensen-Seaman M.I."/>
            <person name="Kwitek A.E."/>
            <person name="Lazar J."/>
            <person name="Pasko D."/>
            <person name="Tonellato P.J."/>
            <person name="Twigger S."/>
            <person name="Ponting C.P."/>
            <person name="Duarte J.M."/>
            <person name="Rice S."/>
            <person name="Goodstadt L."/>
            <person name="Beatson S.A."/>
            <person name="Emes R.D."/>
            <person name="Winter E.E."/>
            <person name="Webber C."/>
            <person name="Brandt P."/>
            <person name="Nyakatura G."/>
            <person name="Adetobi M."/>
            <person name="Chiaromonte F."/>
            <person name="Elnitski L."/>
            <person name="Eswara P."/>
            <person name="Hardison R.C."/>
            <person name="Hou M."/>
            <person name="Kolbe D."/>
            <person name="Makova K."/>
            <person name="Miller W."/>
            <person name="Nekrutenko A."/>
            <person name="Riemer C."/>
            <person name="Schwartz S."/>
            <person name="Taylor J."/>
            <person name="Yang S."/>
            <person name="Zhang Y."/>
            <person name="Lindpaintner K."/>
            <person name="Andrews T.D."/>
            <person name="Caccamo M."/>
            <person name="Clamp M."/>
            <person name="Clarke L."/>
            <person name="Curwen V."/>
            <person name="Durbin R.M."/>
            <person name="Eyras E."/>
            <person name="Searle S.M."/>
            <person name="Cooper G.M."/>
            <person name="Batzoglou S."/>
            <person name="Brudno M."/>
            <person name="Sidow A."/>
            <person name="Stone E.A."/>
            <person name="Payseur B.A."/>
            <person name="Bourque G."/>
            <person name="Lopez-Otin C."/>
            <person name="Puente X.S."/>
            <person name="Chakrabarti K."/>
            <person name="Chatterji S."/>
            <person name="Dewey C."/>
            <person name="Pachter L."/>
            <person name="Bray N."/>
            <person name="Yap V.B."/>
            <person name="Caspi A."/>
            <person name="Tesler G."/>
            <person name="Pevzner P.A."/>
            <person name="Haussler D."/>
            <person name="Roskin K.M."/>
            <person name="Baertsch R."/>
            <person name="Clawson H."/>
            <person name="Furey T.S."/>
            <person name="Hinrichs A.S."/>
            <person name="Karolchik D."/>
            <person name="Kent W.J."/>
            <person name="Rosenbloom K.R."/>
            <person name="Trumbower H."/>
            <person name="Weirauch M."/>
            <person name="Cooper D.N."/>
            <person name="Stenson P.D."/>
            <person name="Ma B."/>
            <person name="Brent M."/>
            <person name="Arumugam M."/>
            <person name="Shteynberg D."/>
            <person name="Copley R.R."/>
            <person name="Taylor M.S."/>
            <person name="Riethman H."/>
            <person name="Mudunuri U."/>
            <person name="Peterson J."/>
            <person name="Guyer M."/>
            <person name="Felsenfeld A."/>
            <person name="Old S."/>
            <person name="Mockrin S."/>
            <person name="Collins F.S."/>
        </authorList>
    </citation>
    <scope>NUCLEOTIDE SEQUENCE [LARGE SCALE GENOMIC DNA]</scope>
    <source>
        <strain>Brown Norway</strain>
    </source>
</reference>
<reference key="2">
    <citation type="journal article" date="2012" name="Nat. Commun.">
        <title>Quantitative maps of protein phosphorylation sites across 14 different rat organs and tissues.</title>
        <authorList>
            <person name="Lundby A."/>
            <person name="Secher A."/>
            <person name="Lage K."/>
            <person name="Nordsborg N.B."/>
            <person name="Dmytriyev A."/>
            <person name="Lundby C."/>
            <person name="Olsen J.V."/>
        </authorList>
    </citation>
    <scope>PHOSPHORYLATION [LARGE SCALE ANALYSIS] AT SER-14</scope>
    <scope>IDENTIFICATION BY MASS SPECTROMETRY [LARGE SCALE ANALYSIS]</scope>
</reference>
<evidence type="ECO:0000250" key="1"/>
<evidence type="ECO:0000250" key="2">
    <source>
        <dbReference type="UniProtKB" id="O00231"/>
    </source>
</evidence>
<evidence type="ECO:0000255" key="3">
    <source>
        <dbReference type="PROSITE-ProRule" id="PRU01185"/>
    </source>
</evidence>
<evidence type="ECO:0000305" key="4"/>
<evidence type="ECO:0007744" key="5">
    <source>
    </source>
</evidence>
<sequence length="422" mass="47464">MAAAAVVEFQRAQSLLSTDREASIDILHSIVKRDIQENDEEAVQVKEQSILELGSLLAKTGQAAELGGLLKYVRPFLNSISKAKAARLVRSLLDLFLDMEAATGQEVELCLECIEWAKSEKRTFLRQALEARLVSLYFDTKRYQEALHLGSQLLRELKKMDDKALLVEVQLLESKTYHALSNLPKARAALTSARTTANAIYCPPKLQATLDMQSGIIHAAEEKDWKTAYSYFYEAFEGYDSIDSPKAITSLKYMLLCKIMLNTPEDVQALVSGKLALRYAGRQTEALKCVAQASKNRSLADFEKALTDYRAELRDDPIISTHLAKLYDNLLEQNLIRVIEPFSRVQIEHISSLIKLSKADVERKLSQMILDKKFHGILDQGEGVLIIFDEPPVDKTYEAALETIQNMSKVVDSLYNKAKKLT</sequence>
<protein>
    <recommendedName>
        <fullName>26S proteasome non-ATPase regulatory subunit 11</fullName>
    </recommendedName>
    <alternativeName>
        <fullName>26S proteasome regulatory subunit RPN6</fullName>
    </alternativeName>
</protein>
<feature type="initiator methionine" description="Removed" evidence="2">
    <location>
        <position position="1"/>
    </location>
</feature>
<feature type="chain" id="PRO_0000419978" description="26S proteasome non-ATPase regulatory subunit 11">
    <location>
        <begin position="2"/>
        <end position="422"/>
    </location>
</feature>
<feature type="domain" description="PCI" evidence="3">
    <location>
        <begin position="224"/>
        <end position="392"/>
    </location>
</feature>
<feature type="modified residue" description="N-acetylalanine" evidence="2">
    <location>
        <position position="2"/>
    </location>
</feature>
<feature type="modified residue" description="Phosphoserine" evidence="5">
    <location>
        <position position="14"/>
    </location>
</feature>
<feature type="modified residue" description="Phosphoserine" evidence="2">
    <location>
        <position position="23"/>
    </location>
</feature>
<feature type="cross-link" description="Glycyl lysine isopeptide (Lys-Gly) (interchain with G-Cter in SUMO2)" evidence="2">
    <location>
        <position position="274"/>
    </location>
</feature>
<keyword id="KW-0002">3D-structure</keyword>
<keyword id="KW-0007">Acetylation</keyword>
<keyword id="KW-0963">Cytoplasm</keyword>
<keyword id="KW-1017">Isopeptide bond</keyword>
<keyword id="KW-0539">Nucleus</keyword>
<keyword id="KW-0597">Phosphoprotein</keyword>
<keyword id="KW-0647">Proteasome</keyword>
<keyword id="KW-1185">Reference proteome</keyword>
<keyword id="KW-0832">Ubl conjugation</keyword>
<comment type="function">
    <text evidence="2">Component of the 26S proteasome, a multiprotein complex involved in the ATP-dependent degradation of ubiquitinated proteins. This complex plays a key role in the maintenance of protein homeostasis by removing misfolded or damaged proteins, which could impair cellular functions, and by removing proteins whose functions are no longer required. Therefore, the proteasome participates in numerous cellular processes, including cell cycle progression, apoptosis, or DNA damage repair. In the complex, PSMD11 is required for proteasome assembly. Plays a key role in increased proteasome activity in embryonic stem cells (ESCs): its high expression in ESCs promotes enhanced assembly of the 26S proteasome, followed by higher proteasome activity.</text>
</comment>
<comment type="subunit">
    <text evidence="2">Component of the 19S proteasome regulatory particle complex. The 26S proteasome consists of a 20S core particle (CP) and two 19S regulatory subunits (RP). The regulatory particle is made of a lid composed of 9 subunits including PSMD11, a base containing 6 ATPases and few additional components.</text>
</comment>
<comment type="subcellular location">
    <subcellularLocation>
        <location evidence="1">Nucleus</location>
    </subcellularLocation>
    <subcellularLocation>
        <location evidence="1">Cytoplasm</location>
        <location evidence="1">Cytosol</location>
    </subcellularLocation>
</comment>
<comment type="PTM">
    <text evidence="1">Phosphorylated by AMPK.</text>
</comment>
<comment type="similarity">
    <text evidence="4">Belongs to the proteasome subunit S9 family.</text>
</comment>